<keyword id="KW-0539">Nucleus</keyword>
<keyword id="KW-1185">Reference proteome</keyword>
<keyword id="KW-0804">Transcription</keyword>
<keyword id="KW-0805">Transcription regulation</keyword>
<name>BUR6_SCHPO</name>
<comment type="function">
    <text evidence="2 3">Transcription regulator complex subunit that is essential for cell cycle progression.</text>
</comment>
<comment type="subcellular location">
    <subcellularLocation>
        <location evidence="2">Nucleus</location>
    </subcellularLocation>
</comment>
<comment type="disruption phenotype">
    <text evidence="2">Leads to only a few rounds of cell division before arresting with an elongated cell (cdc) phenotype.</text>
</comment>
<comment type="similarity">
    <text evidence="5">Belongs to the NC2 alpha/DRAP1 family.</text>
</comment>
<comment type="caution">
    <text evidence="2 3">SPAC17G8.03c was previously identified as the homolog of budding yeast DBP3 in fission yeast (PubMed:15388803). However, it was further demonstrated that SPCC16C4.22 is the true ortholog of DBP3 (PubMed:29109278).</text>
</comment>
<organism>
    <name type="scientific">Schizosaccharomyces pombe (strain 972 / ATCC 24843)</name>
    <name type="common">Fission yeast</name>
    <dbReference type="NCBI Taxonomy" id="284812"/>
    <lineage>
        <taxon>Eukaryota</taxon>
        <taxon>Fungi</taxon>
        <taxon>Dikarya</taxon>
        <taxon>Ascomycota</taxon>
        <taxon>Taphrinomycotina</taxon>
        <taxon>Schizosaccharomycetes</taxon>
        <taxon>Schizosaccharomycetales</taxon>
        <taxon>Schizosaccharomycetaceae</taxon>
        <taxon>Schizosaccharomyces</taxon>
    </lineage>
</organism>
<reference key="1">
    <citation type="journal article" date="2002" name="Nature">
        <title>The genome sequence of Schizosaccharomyces pombe.</title>
        <authorList>
            <person name="Wood V."/>
            <person name="Gwilliam R."/>
            <person name="Rajandream M.A."/>
            <person name="Lyne M.H."/>
            <person name="Lyne R."/>
            <person name="Stewart A."/>
            <person name="Sgouros J.G."/>
            <person name="Peat N."/>
            <person name="Hayles J."/>
            <person name="Baker S.G."/>
            <person name="Basham D."/>
            <person name="Bowman S."/>
            <person name="Brooks K."/>
            <person name="Brown D."/>
            <person name="Brown S."/>
            <person name="Chillingworth T."/>
            <person name="Churcher C.M."/>
            <person name="Collins M."/>
            <person name="Connor R."/>
            <person name="Cronin A."/>
            <person name="Davis P."/>
            <person name="Feltwell T."/>
            <person name="Fraser A."/>
            <person name="Gentles S."/>
            <person name="Goble A."/>
            <person name="Hamlin N."/>
            <person name="Harris D.E."/>
            <person name="Hidalgo J."/>
            <person name="Hodgson G."/>
            <person name="Holroyd S."/>
            <person name="Hornsby T."/>
            <person name="Howarth S."/>
            <person name="Huckle E.J."/>
            <person name="Hunt S."/>
            <person name="Jagels K."/>
            <person name="James K.D."/>
            <person name="Jones L."/>
            <person name="Jones M."/>
            <person name="Leather S."/>
            <person name="McDonald S."/>
            <person name="McLean J."/>
            <person name="Mooney P."/>
            <person name="Moule S."/>
            <person name="Mungall K.L."/>
            <person name="Murphy L.D."/>
            <person name="Niblett D."/>
            <person name="Odell C."/>
            <person name="Oliver K."/>
            <person name="O'Neil S."/>
            <person name="Pearson D."/>
            <person name="Quail M.A."/>
            <person name="Rabbinowitsch E."/>
            <person name="Rutherford K.M."/>
            <person name="Rutter S."/>
            <person name="Saunders D."/>
            <person name="Seeger K."/>
            <person name="Sharp S."/>
            <person name="Skelton J."/>
            <person name="Simmonds M.N."/>
            <person name="Squares R."/>
            <person name="Squares S."/>
            <person name="Stevens K."/>
            <person name="Taylor K."/>
            <person name="Taylor R.G."/>
            <person name="Tivey A."/>
            <person name="Walsh S.V."/>
            <person name="Warren T."/>
            <person name="Whitehead S."/>
            <person name="Woodward J.R."/>
            <person name="Volckaert G."/>
            <person name="Aert R."/>
            <person name="Robben J."/>
            <person name="Grymonprez B."/>
            <person name="Weltjens I."/>
            <person name="Vanstreels E."/>
            <person name="Rieger M."/>
            <person name="Schaefer M."/>
            <person name="Mueller-Auer S."/>
            <person name="Gabel C."/>
            <person name="Fuchs M."/>
            <person name="Duesterhoeft A."/>
            <person name="Fritzc C."/>
            <person name="Holzer E."/>
            <person name="Moestl D."/>
            <person name="Hilbert H."/>
            <person name="Borzym K."/>
            <person name="Langer I."/>
            <person name="Beck A."/>
            <person name="Lehrach H."/>
            <person name="Reinhardt R."/>
            <person name="Pohl T.M."/>
            <person name="Eger P."/>
            <person name="Zimmermann W."/>
            <person name="Wedler H."/>
            <person name="Wambutt R."/>
            <person name="Purnelle B."/>
            <person name="Goffeau A."/>
            <person name="Cadieu E."/>
            <person name="Dreano S."/>
            <person name="Gloux S."/>
            <person name="Lelaure V."/>
            <person name="Mottier S."/>
            <person name="Galibert F."/>
            <person name="Aves S.J."/>
            <person name="Xiang Z."/>
            <person name="Hunt C."/>
            <person name="Moore K."/>
            <person name="Hurst S.M."/>
            <person name="Lucas M."/>
            <person name="Rochet M."/>
            <person name="Gaillardin C."/>
            <person name="Tallada V.A."/>
            <person name="Garzon A."/>
            <person name="Thode G."/>
            <person name="Daga R.R."/>
            <person name="Cruzado L."/>
            <person name="Jimenez J."/>
            <person name="Sanchez M."/>
            <person name="del Rey F."/>
            <person name="Benito J."/>
            <person name="Dominguez A."/>
            <person name="Revuelta J.L."/>
            <person name="Moreno S."/>
            <person name="Armstrong J."/>
            <person name="Forsburg S.L."/>
            <person name="Cerutti L."/>
            <person name="Lowe T."/>
            <person name="McCombie W.R."/>
            <person name="Paulsen I."/>
            <person name="Potashkin J."/>
            <person name="Shpakovski G.V."/>
            <person name="Ussery D."/>
            <person name="Barrell B.G."/>
            <person name="Nurse P."/>
        </authorList>
    </citation>
    <scope>NUCLEOTIDE SEQUENCE [LARGE SCALE GENOMIC DNA]</scope>
    <source>
        <strain>972 / ATCC 24843</strain>
    </source>
</reference>
<reference key="2">
    <citation type="journal article" date="2000" name="Genes Cells">
        <title>Large-scale screening of intracellular protein localization in living fission yeast cells by the use of a GFP-fusion genomic DNA library.</title>
        <authorList>
            <person name="Ding D.-Q."/>
            <person name="Tomita Y."/>
            <person name="Yamamoto A."/>
            <person name="Chikashige Y."/>
            <person name="Haraguchi T."/>
            <person name="Hiraoka Y."/>
        </authorList>
    </citation>
    <scope>NUCLEOTIDE SEQUENCE [LARGE SCALE GENOMIC DNA] OF 1-172</scope>
    <scope>SUBCELLULAR LOCATION</scope>
    <source>
        <strain>ATCC 38364 / 968</strain>
    </source>
</reference>
<reference key="3">
    <citation type="journal article" date="2004" name="Nucleic Acids Res.">
        <title>Identification and cloning of two putative subunits of DNA polymerase epsilon in fission yeast.</title>
        <authorList>
            <person name="Spiga M.-G."/>
            <person name="D'Urso G."/>
        </authorList>
    </citation>
    <scope>FUNCTION</scope>
    <scope>DISRUPTION PHENOTYPE</scope>
    <scope>SUBCELLULAR LOCATION</scope>
</reference>
<reference key="4">
    <citation type="journal article" date="2017" name="Proc. Natl. Acad. Sci. U.S.A.">
        <title>Coordinated regulation of heterochromatin inheritance by Dpb3-Dpb4 complex.</title>
        <authorList>
            <person name="He H."/>
            <person name="Li Y."/>
            <person name="Dong Q."/>
            <person name="Chang A.Y."/>
            <person name="Gao F."/>
            <person name="Chi Z."/>
            <person name="Su M."/>
            <person name="Zhang F."/>
            <person name="Ban H."/>
            <person name="Martienssen R."/>
            <person name="Chen Y.H."/>
            <person name="Li F."/>
        </authorList>
    </citation>
    <scope>FUNCTION</scope>
</reference>
<proteinExistence type="inferred from homology"/>
<gene>
    <name evidence="4" type="primary">bur6</name>
    <name type="ORF">SPAC17G8.03c</name>
</gene>
<sequence length="199" mass="22236">MGDPTNNNDSETKPNPATYWKSRFPVARIKKIMQADQDVGKVAQVTPVIMSKALELFMQSIIQESCKQTRLHQAKRVTVSHLKHAVQSVEQFDFLQDIVEKVPDAPPIKAERKTKRPRARRAANEGEHNESVPAKKVKKNTVKEEEIEKDDESATTETPVKEEPTGEETEADHEEKASVDHGNFSDKTTSEASSASGDE</sequence>
<feature type="chain" id="PRO_0000208348" description="Transcription regulator complex subunit bur6">
    <location>
        <begin position="1"/>
        <end position="199"/>
    </location>
</feature>
<feature type="region of interest" description="Disordered" evidence="1">
    <location>
        <begin position="106"/>
        <end position="199"/>
    </location>
</feature>
<feature type="compositionally biased region" description="Basic residues" evidence="1">
    <location>
        <begin position="112"/>
        <end position="121"/>
    </location>
</feature>
<feature type="compositionally biased region" description="Polar residues" evidence="1">
    <location>
        <begin position="185"/>
        <end position="199"/>
    </location>
</feature>
<protein>
    <recommendedName>
        <fullName evidence="4">Transcription regulator complex subunit bur6</fullName>
    </recommendedName>
</protein>
<accession>Q10315</accession>
<accession>Q9US69</accession>
<evidence type="ECO:0000256" key="1">
    <source>
        <dbReference type="SAM" id="MobiDB-lite"/>
    </source>
</evidence>
<evidence type="ECO:0000269" key="2">
    <source>
    </source>
</evidence>
<evidence type="ECO:0000269" key="3">
    <source>
    </source>
</evidence>
<evidence type="ECO:0000303" key="4">
    <source>
    </source>
</evidence>
<evidence type="ECO:0000305" key="5"/>
<dbReference type="EMBL" id="CU329670">
    <property type="protein sequence ID" value="CAA93686.1"/>
    <property type="molecule type" value="Genomic_DNA"/>
</dbReference>
<dbReference type="EMBL" id="AB028008">
    <property type="protein sequence ID" value="BAA87312.1"/>
    <property type="molecule type" value="Genomic_DNA"/>
</dbReference>
<dbReference type="PIR" id="T37855">
    <property type="entry name" value="T37855"/>
</dbReference>
<dbReference type="RefSeq" id="NP_593726.1">
    <property type="nucleotide sequence ID" value="NM_001019157.2"/>
</dbReference>
<dbReference type="SMR" id="Q10315"/>
<dbReference type="BioGRID" id="278676">
    <property type="interactions" value="5"/>
</dbReference>
<dbReference type="FunCoup" id="Q10315">
    <property type="interactions" value="260"/>
</dbReference>
<dbReference type="IntAct" id="Q10315">
    <property type="interactions" value="2"/>
</dbReference>
<dbReference type="STRING" id="284812.Q10315"/>
<dbReference type="iPTMnet" id="Q10315"/>
<dbReference type="PaxDb" id="4896-SPAC17G8.03c.1"/>
<dbReference type="EnsemblFungi" id="SPAC17G8.03c.1">
    <property type="protein sequence ID" value="SPAC17G8.03c.1:pep"/>
    <property type="gene ID" value="SPAC17G8.03c"/>
</dbReference>
<dbReference type="GeneID" id="2542201"/>
<dbReference type="KEGG" id="spo:2542201"/>
<dbReference type="PomBase" id="SPAC17G8.03c">
    <property type="gene designation" value="bur6"/>
</dbReference>
<dbReference type="VEuPathDB" id="FungiDB:SPAC17G8.03c"/>
<dbReference type="eggNOG" id="KOG1659">
    <property type="taxonomic scope" value="Eukaryota"/>
</dbReference>
<dbReference type="HOGENOM" id="CLU_045277_3_1_1"/>
<dbReference type="InParanoid" id="Q10315"/>
<dbReference type="OMA" id="TEVEPAH"/>
<dbReference type="PhylomeDB" id="Q10315"/>
<dbReference type="PRO" id="PR:Q10315"/>
<dbReference type="Proteomes" id="UP000002485">
    <property type="component" value="Chromosome I"/>
</dbReference>
<dbReference type="GO" id="GO:0000785">
    <property type="term" value="C:chromatin"/>
    <property type="evidence" value="ECO:0000305"/>
    <property type="project" value="PomBase"/>
</dbReference>
<dbReference type="GO" id="GO:0005829">
    <property type="term" value="C:cytosol"/>
    <property type="evidence" value="ECO:0007005"/>
    <property type="project" value="PomBase"/>
</dbReference>
<dbReference type="GO" id="GO:0008622">
    <property type="term" value="C:epsilon DNA polymerase complex"/>
    <property type="evidence" value="ECO:0000303"/>
    <property type="project" value="ComplexPortal"/>
</dbReference>
<dbReference type="GO" id="GO:0017054">
    <property type="term" value="C:negative cofactor 2 complex"/>
    <property type="evidence" value="ECO:0000318"/>
    <property type="project" value="GO_Central"/>
</dbReference>
<dbReference type="GO" id="GO:0043596">
    <property type="term" value="C:nuclear replication fork"/>
    <property type="evidence" value="ECO:0000303"/>
    <property type="project" value="PomBase"/>
</dbReference>
<dbReference type="GO" id="GO:0005634">
    <property type="term" value="C:nucleus"/>
    <property type="evidence" value="ECO:0000314"/>
    <property type="project" value="PomBase"/>
</dbReference>
<dbReference type="GO" id="GO:0001046">
    <property type="term" value="F:core promoter sequence-specific DNA binding"/>
    <property type="evidence" value="ECO:0000318"/>
    <property type="project" value="GO_Central"/>
</dbReference>
<dbReference type="GO" id="GO:0046982">
    <property type="term" value="F:protein heterodimerization activity"/>
    <property type="evidence" value="ECO:0007669"/>
    <property type="project" value="InterPro"/>
</dbReference>
<dbReference type="GO" id="GO:0016251">
    <property type="term" value="F:RNA polymerase II general transcription initiation factor activity"/>
    <property type="evidence" value="ECO:0000318"/>
    <property type="project" value="GO_Central"/>
</dbReference>
<dbReference type="GO" id="GO:0006261">
    <property type="term" value="P:DNA-templated DNA replication"/>
    <property type="evidence" value="ECO:0000303"/>
    <property type="project" value="ComplexPortal"/>
</dbReference>
<dbReference type="GO" id="GO:0006366">
    <property type="term" value="P:transcription by RNA polymerase II"/>
    <property type="evidence" value="ECO:0000318"/>
    <property type="project" value="GO_Central"/>
</dbReference>
<dbReference type="CDD" id="cd22906">
    <property type="entry name" value="HFD_DRAP1"/>
    <property type="match status" value="1"/>
</dbReference>
<dbReference type="Gene3D" id="1.10.20.10">
    <property type="entry name" value="Histone, subunit A"/>
    <property type="match status" value="1"/>
</dbReference>
<dbReference type="InterPro" id="IPR003958">
    <property type="entry name" value="CBFA_NFYB_domain"/>
</dbReference>
<dbReference type="InterPro" id="IPR009072">
    <property type="entry name" value="Histone-fold"/>
</dbReference>
<dbReference type="InterPro" id="IPR050568">
    <property type="entry name" value="Transcr_DNA_Rep_Reg"/>
</dbReference>
<dbReference type="PANTHER" id="PTHR10252:SF5">
    <property type="entry name" value="DR1-ASSOCIATED COREPRESSOR"/>
    <property type="match status" value="1"/>
</dbReference>
<dbReference type="PANTHER" id="PTHR10252">
    <property type="entry name" value="HISTONE-LIKE TRANSCRIPTION FACTOR CCAAT-RELATED"/>
    <property type="match status" value="1"/>
</dbReference>
<dbReference type="Pfam" id="PF00808">
    <property type="entry name" value="CBFD_NFYB_HMF"/>
    <property type="match status" value="1"/>
</dbReference>
<dbReference type="SUPFAM" id="SSF47113">
    <property type="entry name" value="Histone-fold"/>
    <property type="match status" value="1"/>
</dbReference>